<accession>A9A1F7</accession>
<name>ASPD_NITMS</name>
<feature type="chain" id="PRO_1000140088" description="L-aspartate dehydrogenase">
    <location>
        <begin position="1"/>
        <end position="272"/>
    </location>
</feature>
<feature type="active site" evidence="1">
    <location>
        <position position="222"/>
    </location>
</feature>
<feature type="binding site" evidence="1">
    <location>
        <position position="125"/>
    </location>
    <ligand>
        <name>NAD(+)</name>
        <dbReference type="ChEBI" id="CHEBI:57540"/>
    </ligand>
</feature>
<feature type="binding site" evidence="1">
    <location>
        <position position="192"/>
    </location>
    <ligand>
        <name>NAD(+)</name>
        <dbReference type="ChEBI" id="CHEBI:57540"/>
    </ligand>
</feature>
<keyword id="KW-0520">NAD</keyword>
<keyword id="KW-0521">NADP</keyword>
<keyword id="KW-0560">Oxidoreductase</keyword>
<keyword id="KW-0662">Pyridine nucleotide biosynthesis</keyword>
<keyword id="KW-1185">Reference proteome</keyword>
<proteinExistence type="inferred from homology"/>
<protein>
    <recommendedName>
        <fullName evidence="1">L-aspartate dehydrogenase</fullName>
        <ecNumber evidence="1">1.4.1.21</ecNumber>
    </recommendedName>
</protein>
<evidence type="ECO:0000255" key="1">
    <source>
        <dbReference type="HAMAP-Rule" id="MF_01265"/>
    </source>
</evidence>
<dbReference type="EC" id="1.4.1.21" evidence="1"/>
<dbReference type="EMBL" id="CP000866">
    <property type="protein sequence ID" value="ABX13136.1"/>
    <property type="molecule type" value="Genomic_DNA"/>
</dbReference>
<dbReference type="RefSeq" id="WP_012215623.1">
    <property type="nucleotide sequence ID" value="NC_010085.1"/>
</dbReference>
<dbReference type="SMR" id="A9A1F7"/>
<dbReference type="STRING" id="436308.Nmar_1240"/>
<dbReference type="EnsemblBacteria" id="ABX13136">
    <property type="protein sequence ID" value="ABX13136"/>
    <property type="gene ID" value="Nmar_1240"/>
</dbReference>
<dbReference type="GeneID" id="5773947"/>
<dbReference type="KEGG" id="nmr:Nmar_1240"/>
<dbReference type="eggNOG" id="arCOG00254">
    <property type="taxonomic scope" value="Archaea"/>
</dbReference>
<dbReference type="HOGENOM" id="CLU_089550_0_0_2"/>
<dbReference type="InParanoid" id="A9A1F7"/>
<dbReference type="OrthoDB" id="15415at2157"/>
<dbReference type="PhylomeDB" id="A9A1F7"/>
<dbReference type="UniPathway" id="UPA00253">
    <property type="reaction ID" value="UER00456"/>
</dbReference>
<dbReference type="Proteomes" id="UP000000792">
    <property type="component" value="Chromosome"/>
</dbReference>
<dbReference type="GO" id="GO:0033735">
    <property type="term" value="F:aspartate dehydrogenase activity"/>
    <property type="evidence" value="ECO:0007669"/>
    <property type="project" value="UniProtKB-EC"/>
</dbReference>
<dbReference type="GO" id="GO:0051287">
    <property type="term" value="F:NAD binding"/>
    <property type="evidence" value="ECO:0007669"/>
    <property type="project" value="UniProtKB-UniRule"/>
</dbReference>
<dbReference type="GO" id="GO:0050661">
    <property type="term" value="F:NADP binding"/>
    <property type="evidence" value="ECO:0007669"/>
    <property type="project" value="UniProtKB-UniRule"/>
</dbReference>
<dbReference type="GO" id="GO:0016639">
    <property type="term" value="F:oxidoreductase activity, acting on the CH-NH2 group of donors, NAD or NADP as acceptor"/>
    <property type="evidence" value="ECO:0007669"/>
    <property type="project" value="UniProtKB-UniRule"/>
</dbReference>
<dbReference type="GO" id="GO:0009435">
    <property type="term" value="P:NAD biosynthetic process"/>
    <property type="evidence" value="ECO:0007669"/>
    <property type="project" value="UniProtKB-UniRule"/>
</dbReference>
<dbReference type="Gene3D" id="3.30.360.10">
    <property type="entry name" value="Dihydrodipicolinate Reductase, domain 2"/>
    <property type="match status" value="1"/>
</dbReference>
<dbReference type="Gene3D" id="3.40.50.720">
    <property type="entry name" value="NAD(P)-binding Rossmann-like Domain"/>
    <property type="match status" value="1"/>
</dbReference>
<dbReference type="HAMAP" id="MF_01265">
    <property type="entry name" value="NadX"/>
    <property type="match status" value="1"/>
</dbReference>
<dbReference type="InterPro" id="IPR005106">
    <property type="entry name" value="Asp/hSer_DH_NAD-bd"/>
</dbReference>
<dbReference type="InterPro" id="IPR002811">
    <property type="entry name" value="Asp_DH"/>
</dbReference>
<dbReference type="InterPro" id="IPR022487">
    <property type="entry name" value="Asp_DH_arc"/>
</dbReference>
<dbReference type="InterPro" id="IPR020626">
    <property type="entry name" value="Asp_DH_prok"/>
</dbReference>
<dbReference type="InterPro" id="IPR011182">
    <property type="entry name" value="L-Asp_DH"/>
</dbReference>
<dbReference type="InterPro" id="IPR036291">
    <property type="entry name" value="NAD(P)-bd_dom_sf"/>
</dbReference>
<dbReference type="NCBIfam" id="TIGR03855">
    <property type="entry name" value="NAD_NadX"/>
    <property type="match status" value="1"/>
</dbReference>
<dbReference type="NCBIfam" id="NF009828">
    <property type="entry name" value="PRK13303.1-3"/>
    <property type="match status" value="1"/>
</dbReference>
<dbReference type="NCBIfam" id="NF009829">
    <property type="entry name" value="PRK13303.1-4"/>
    <property type="match status" value="1"/>
</dbReference>
<dbReference type="NCBIfam" id="NF009830">
    <property type="entry name" value="PRK13304.1"/>
    <property type="match status" value="1"/>
</dbReference>
<dbReference type="PANTHER" id="PTHR31873:SF6">
    <property type="entry name" value="ASPARTATE DEHYDROGENASE DOMAIN-CONTAINING PROTEIN"/>
    <property type="match status" value="1"/>
</dbReference>
<dbReference type="PANTHER" id="PTHR31873">
    <property type="entry name" value="L-ASPARTATE DEHYDROGENASE-RELATED"/>
    <property type="match status" value="1"/>
</dbReference>
<dbReference type="Pfam" id="PF01958">
    <property type="entry name" value="Asp_DH_C"/>
    <property type="match status" value="1"/>
</dbReference>
<dbReference type="Pfam" id="PF03447">
    <property type="entry name" value="NAD_binding_3"/>
    <property type="match status" value="1"/>
</dbReference>
<dbReference type="PIRSF" id="PIRSF005227">
    <property type="entry name" value="Asp_dh_NAD_syn"/>
    <property type="match status" value="1"/>
</dbReference>
<dbReference type="SUPFAM" id="SSF55347">
    <property type="entry name" value="Glyceraldehyde-3-phosphate dehydrogenase-like, C-terminal domain"/>
    <property type="match status" value="1"/>
</dbReference>
<dbReference type="SUPFAM" id="SSF51735">
    <property type="entry name" value="NAD(P)-binding Rossmann-fold domains"/>
    <property type="match status" value="1"/>
</dbReference>
<reference key="1">
    <citation type="journal article" date="2010" name="Proc. Natl. Acad. Sci. U.S.A.">
        <title>Nitrosopumilus maritimus genome reveals unique mechanisms for nitrification and autotrophy in globally distributed marine crenarchaea.</title>
        <authorList>
            <person name="Walker C.B."/>
            <person name="de la Torre J.R."/>
            <person name="Klotz M.G."/>
            <person name="Urakawa H."/>
            <person name="Pinel N."/>
            <person name="Arp D.J."/>
            <person name="Brochier-Armanet C."/>
            <person name="Chain P.S."/>
            <person name="Chan P.P."/>
            <person name="Gollabgir A."/>
            <person name="Hemp J."/>
            <person name="Hugler M."/>
            <person name="Karr E.A."/>
            <person name="Konneke M."/>
            <person name="Shin M."/>
            <person name="Lawton T.J."/>
            <person name="Lowe T."/>
            <person name="Martens-Habbena W."/>
            <person name="Sayavedra-Soto L.A."/>
            <person name="Lang D."/>
            <person name="Sievert S.M."/>
            <person name="Rosenzweig A.C."/>
            <person name="Manning G."/>
            <person name="Stahl D.A."/>
        </authorList>
    </citation>
    <scope>NUCLEOTIDE SEQUENCE [LARGE SCALE GENOMIC DNA]</scope>
    <source>
        <strain>SCM1</strain>
    </source>
</reference>
<comment type="function">
    <text evidence="1">Specifically catalyzes the NAD or NADP-dependent dehydrogenation of L-aspartate to iminoaspartate.</text>
</comment>
<comment type="catalytic activity">
    <reaction evidence="1">
        <text>L-aspartate + NADP(+) + H2O = oxaloacetate + NH4(+) + NADPH + H(+)</text>
        <dbReference type="Rhea" id="RHEA:11784"/>
        <dbReference type="ChEBI" id="CHEBI:15377"/>
        <dbReference type="ChEBI" id="CHEBI:15378"/>
        <dbReference type="ChEBI" id="CHEBI:16452"/>
        <dbReference type="ChEBI" id="CHEBI:28938"/>
        <dbReference type="ChEBI" id="CHEBI:29991"/>
        <dbReference type="ChEBI" id="CHEBI:57783"/>
        <dbReference type="ChEBI" id="CHEBI:58349"/>
        <dbReference type="EC" id="1.4.1.21"/>
    </reaction>
</comment>
<comment type="catalytic activity">
    <reaction evidence="1">
        <text>L-aspartate + NAD(+) + H2O = oxaloacetate + NH4(+) + NADH + H(+)</text>
        <dbReference type="Rhea" id="RHEA:11788"/>
        <dbReference type="ChEBI" id="CHEBI:15377"/>
        <dbReference type="ChEBI" id="CHEBI:15378"/>
        <dbReference type="ChEBI" id="CHEBI:16452"/>
        <dbReference type="ChEBI" id="CHEBI:28938"/>
        <dbReference type="ChEBI" id="CHEBI:29991"/>
        <dbReference type="ChEBI" id="CHEBI:57540"/>
        <dbReference type="ChEBI" id="CHEBI:57945"/>
        <dbReference type="EC" id="1.4.1.21"/>
    </reaction>
</comment>
<comment type="pathway">
    <text evidence="1">Cofactor biosynthesis; NAD(+) biosynthesis; iminoaspartate from L-aspartate (dehydrogenase route): step 1/1.</text>
</comment>
<comment type="miscellaneous">
    <text evidence="1">The iminoaspartate product is unstable in aqueous solution and can decompose to oxaloacetate and ammonia.</text>
</comment>
<comment type="similarity">
    <text evidence="1">Belongs to the L-aspartate dehydrogenase family.</text>
</comment>
<gene>
    <name evidence="1" type="primary">nadX</name>
    <name type="ordered locus">Nmar_1240</name>
</gene>
<organism>
    <name type="scientific">Nitrosopumilus maritimus (strain SCM1)</name>
    <dbReference type="NCBI Taxonomy" id="436308"/>
    <lineage>
        <taxon>Archaea</taxon>
        <taxon>Nitrososphaerota</taxon>
        <taxon>Nitrososphaeria</taxon>
        <taxon>Nitrosopumilales</taxon>
        <taxon>Nitrosopumilaceae</taxon>
        <taxon>Nitrosopumilus</taxon>
    </lineage>
</organism>
<sequence>MKRIALLGCGSMGTQIALAIDSENFPATLTHVYDESKDASFSLTQKLKNKPEIVENSHLLSSQPIDIVVEAASQNAVKDVALSVIQNKKDLMIMSVGALLDESIYDILSDACNDFKKTIYLPSGAIAGLDGLKSVKDELESISITTTKHPRSLKGAKFFETSDINLDEITSSTVVYKGTAKEAVTLFPANINVAALLSLTGIGSEKTSVTIVADPNTDKNTHHIEASGKFGTMTFTIENVPDSNNPKTSRLAILSAIETLKKYCSDDIQIGT</sequence>